<keyword id="KW-0997">Cell inner membrane</keyword>
<keyword id="KW-1003">Cell membrane</keyword>
<keyword id="KW-0342">GTP-binding</keyword>
<keyword id="KW-0406">Ion transport</keyword>
<keyword id="KW-0408">Iron</keyword>
<keyword id="KW-0410">Iron transport</keyword>
<keyword id="KW-0472">Membrane</keyword>
<keyword id="KW-0547">Nucleotide-binding</keyword>
<keyword id="KW-1185">Reference proteome</keyword>
<keyword id="KW-0812">Transmembrane</keyword>
<keyword id="KW-1133">Transmembrane helix</keyword>
<keyword id="KW-0813">Transport</keyword>
<accession>P73182</accession>
<sequence length="614" mass="67405">MVSHCQRGSVQSSRPDVKKRVAFIGQPNTGKSTFFNRITKANAAIANWPGLTVDLFRAVVPLQGELIEFVDLPGIYDLNGFSEDERVVQRFLANYAVNLVVVVVNAAQIDRQIRLLLQVQTLGIPAITLLNLADEAKRYGVQIDVAALQERLGLPLYPISAKYGTGCSRAMDAIGRAVKDQPEAYQIPNLVNVLSDHPVAIADMETALAGVVQMPSPNARTLTNVIDGVMLHPVFGLPIFFASMFGVFWVIWHVGLPSADPVDAVTGWVQSNILEPLFSPLPTILQGLLLDGIWTGFAALLSFVPLVAIFFIVMGILEGSGYLSRAAYLMDALMGRLGLDGRSFVLQMMGFGCNVPAIMGTRVMRSRGMRLLSMLVIPFSLCSARLQVFVFILAAVMPGTQGAIALFLLYLMSFVAAFTVAAILSRFHYFQARDPFVLELPPYRLPTFKQVFLRVWGEMREFVARLSMFMVIGSSLIWFLTSFPQGSTGLETFAGRIGSVFQPLMNPLGINPFLTISLIFGFVAKEVQIAALTVIYGLNNSEAVSDQIHSTVTFAQGFSYCLFSLIYIPCLTTLGAIWGESKSLAYTAISVATPLVTAWLFSFIFYQSFSWLGW</sequence>
<feature type="chain" id="PRO_0000210847" description="Fe(2+) transporter FeoB">
    <location>
        <begin position="1"/>
        <end position="614"/>
    </location>
</feature>
<feature type="transmembrane region" description="Helical" evidence="2">
    <location>
        <begin position="234"/>
        <end position="254"/>
    </location>
</feature>
<feature type="transmembrane region" description="Helical" evidence="2">
    <location>
        <begin position="297"/>
        <end position="317"/>
    </location>
</feature>
<feature type="transmembrane region" description="Helical" evidence="2">
    <location>
        <begin position="374"/>
        <end position="394"/>
    </location>
</feature>
<feature type="transmembrane region" description="Helical" evidence="2">
    <location>
        <begin position="404"/>
        <end position="424"/>
    </location>
</feature>
<feature type="transmembrane region" description="Helical" evidence="2">
    <location>
        <begin position="466"/>
        <end position="486"/>
    </location>
</feature>
<feature type="transmembrane region" description="Helical" evidence="2">
    <location>
        <begin position="504"/>
        <end position="524"/>
    </location>
</feature>
<feature type="transmembrane region" description="Helical" evidence="2">
    <location>
        <begin position="558"/>
        <end position="578"/>
    </location>
</feature>
<feature type="transmembrane region" description="Helical" evidence="2">
    <location>
        <begin position="585"/>
        <end position="605"/>
    </location>
</feature>
<feature type="domain" description="FeoB-type G" evidence="3">
    <location>
        <begin position="18"/>
        <end position="180"/>
    </location>
</feature>
<feature type="binding site" evidence="3">
    <location>
        <begin position="25"/>
        <end position="32"/>
    </location>
    <ligand>
        <name>GTP</name>
        <dbReference type="ChEBI" id="CHEBI:37565"/>
        <label>1</label>
    </ligand>
</feature>
<feature type="binding site" evidence="3">
    <location>
        <begin position="50"/>
        <end position="54"/>
    </location>
    <ligand>
        <name>GTP</name>
        <dbReference type="ChEBI" id="CHEBI:37565"/>
        <label>2</label>
    </ligand>
</feature>
<feature type="binding site" evidence="3">
    <location>
        <begin position="71"/>
        <end position="74"/>
    </location>
    <ligand>
        <name>GTP</name>
        <dbReference type="ChEBI" id="CHEBI:37565"/>
        <label>3</label>
    </ligand>
</feature>
<feature type="binding site" evidence="3">
    <location>
        <begin position="131"/>
        <end position="134"/>
    </location>
    <ligand>
        <name>GTP</name>
        <dbReference type="ChEBI" id="CHEBI:37565"/>
    </ligand>
</feature>
<feature type="binding site" evidence="3">
    <location>
        <begin position="160"/>
        <end position="162"/>
    </location>
    <ligand>
        <name>GTP</name>
        <dbReference type="ChEBI" id="CHEBI:37565"/>
    </ligand>
</feature>
<protein>
    <recommendedName>
        <fullName evidence="4">Fe(2+) transporter FeoB</fullName>
    </recommendedName>
    <alternativeName>
        <fullName>Ferrous iron transport protein B homolog</fullName>
    </alternativeName>
</protein>
<organism>
    <name type="scientific">Synechocystis sp. (strain ATCC 27184 / PCC 6803 / Kazusa)</name>
    <dbReference type="NCBI Taxonomy" id="1111708"/>
    <lineage>
        <taxon>Bacteria</taxon>
        <taxon>Bacillati</taxon>
        <taxon>Cyanobacteriota</taxon>
        <taxon>Cyanophyceae</taxon>
        <taxon>Synechococcales</taxon>
        <taxon>Merismopediaceae</taxon>
        <taxon>Synechocystis</taxon>
    </lineage>
</organism>
<proteinExistence type="inferred from homology"/>
<reference key="1">
    <citation type="journal article" date="1996" name="DNA Res.">
        <title>Sequence analysis of the genome of the unicellular cyanobacterium Synechocystis sp. strain PCC6803. II. Sequence determination of the entire genome and assignment of potential protein-coding regions.</title>
        <authorList>
            <person name="Kaneko T."/>
            <person name="Sato S."/>
            <person name="Kotani H."/>
            <person name="Tanaka A."/>
            <person name="Asamizu E."/>
            <person name="Nakamura Y."/>
            <person name="Miyajima N."/>
            <person name="Hirosawa M."/>
            <person name="Sugiura M."/>
            <person name="Sasamoto S."/>
            <person name="Kimura T."/>
            <person name="Hosouchi T."/>
            <person name="Matsuno A."/>
            <person name="Muraki A."/>
            <person name="Nakazaki N."/>
            <person name="Naruo K."/>
            <person name="Okumura S."/>
            <person name="Shimpo S."/>
            <person name="Takeuchi C."/>
            <person name="Wada T."/>
            <person name="Watanabe A."/>
            <person name="Yamada M."/>
            <person name="Yasuda M."/>
            <person name="Tabata S."/>
        </authorList>
    </citation>
    <scope>NUCLEOTIDE SEQUENCE [LARGE SCALE GENOMIC DNA]</scope>
    <source>
        <strain>ATCC 27184 / PCC 6803 / Kazusa</strain>
    </source>
</reference>
<comment type="function">
    <text evidence="1">Probable transporter of a GTP-driven Fe(2+) uptake system.</text>
</comment>
<comment type="subcellular location">
    <subcellularLocation>
        <location evidence="4">Cell inner membrane</location>
        <topology evidence="2">Multi-pass membrane protein</topology>
    </subcellularLocation>
</comment>
<comment type="similarity">
    <text evidence="3">Belongs to the TRAFAC class TrmE-Era-EngA-EngB-Septin-like GTPase superfamily. FeoB GTPase (TC 9.A.8) family.</text>
</comment>
<gene>
    <name type="primary">feoB</name>
    <name type="ordered locus">slr1392</name>
</gene>
<name>FEOB_SYNY3</name>
<evidence type="ECO:0000250" key="1">
    <source>
        <dbReference type="UniProtKB" id="P33650"/>
    </source>
</evidence>
<evidence type="ECO:0000255" key="2"/>
<evidence type="ECO:0000255" key="3">
    <source>
        <dbReference type="PROSITE-ProRule" id="PRU01048"/>
    </source>
</evidence>
<evidence type="ECO:0000305" key="4"/>
<dbReference type="EMBL" id="BA000022">
    <property type="protein sequence ID" value="BAA17208.1"/>
    <property type="molecule type" value="Genomic_DNA"/>
</dbReference>
<dbReference type="PIR" id="S75294">
    <property type="entry name" value="S75294"/>
</dbReference>
<dbReference type="SMR" id="P73182"/>
<dbReference type="STRING" id="1148.gene:10498071"/>
<dbReference type="TCDB" id="9.A.8.1.3">
    <property type="family name" value="the ferrous iron uptake (feob) family"/>
</dbReference>
<dbReference type="PaxDb" id="1148-1652285"/>
<dbReference type="EnsemblBacteria" id="BAA17208">
    <property type="protein sequence ID" value="BAA17208"/>
    <property type="gene ID" value="BAA17208"/>
</dbReference>
<dbReference type="KEGG" id="syn:slr1392"/>
<dbReference type="eggNOG" id="COG0370">
    <property type="taxonomic scope" value="Bacteria"/>
</dbReference>
<dbReference type="InParanoid" id="P73182"/>
<dbReference type="PhylomeDB" id="P73182"/>
<dbReference type="Proteomes" id="UP000001425">
    <property type="component" value="Chromosome"/>
</dbReference>
<dbReference type="GO" id="GO:0005886">
    <property type="term" value="C:plasma membrane"/>
    <property type="evidence" value="ECO:0000318"/>
    <property type="project" value="GO_Central"/>
</dbReference>
<dbReference type="GO" id="GO:0015093">
    <property type="term" value="F:ferrous iron transmembrane transporter activity"/>
    <property type="evidence" value="ECO:0000318"/>
    <property type="project" value="GO_Central"/>
</dbReference>
<dbReference type="GO" id="GO:0005525">
    <property type="term" value="F:GTP binding"/>
    <property type="evidence" value="ECO:0007669"/>
    <property type="project" value="UniProtKB-KW"/>
</dbReference>
<dbReference type="CDD" id="cd01879">
    <property type="entry name" value="FeoB"/>
    <property type="match status" value="1"/>
</dbReference>
<dbReference type="Gene3D" id="3.40.50.300">
    <property type="entry name" value="P-loop containing nucleotide triphosphate hydrolases"/>
    <property type="match status" value="1"/>
</dbReference>
<dbReference type="InterPro" id="IPR003373">
    <property type="entry name" value="Fe2_transport_prot-B"/>
</dbReference>
<dbReference type="InterPro" id="IPR011640">
    <property type="entry name" value="Fe2_transport_prot_B_C"/>
</dbReference>
<dbReference type="InterPro" id="IPR050860">
    <property type="entry name" value="FeoB_GTPase"/>
</dbReference>
<dbReference type="InterPro" id="IPR030389">
    <property type="entry name" value="G_FEOB_dom"/>
</dbReference>
<dbReference type="InterPro" id="IPR011642">
    <property type="entry name" value="Gate_dom"/>
</dbReference>
<dbReference type="InterPro" id="IPR006073">
    <property type="entry name" value="GTP-bd"/>
</dbReference>
<dbReference type="InterPro" id="IPR027417">
    <property type="entry name" value="P-loop_NTPase"/>
</dbReference>
<dbReference type="NCBIfam" id="TIGR00437">
    <property type="entry name" value="feoB"/>
    <property type="match status" value="1"/>
</dbReference>
<dbReference type="PANTHER" id="PTHR43185:SF1">
    <property type="entry name" value="FE(2+) TRANSPORTER FEOB"/>
    <property type="match status" value="1"/>
</dbReference>
<dbReference type="PANTHER" id="PTHR43185">
    <property type="entry name" value="FERROUS IRON TRANSPORT PROTEIN B"/>
    <property type="match status" value="1"/>
</dbReference>
<dbReference type="Pfam" id="PF07664">
    <property type="entry name" value="FeoB_C"/>
    <property type="match status" value="1"/>
</dbReference>
<dbReference type="Pfam" id="PF02421">
    <property type="entry name" value="FeoB_N"/>
    <property type="match status" value="1"/>
</dbReference>
<dbReference type="Pfam" id="PF07670">
    <property type="entry name" value="Gate"/>
    <property type="match status" value="2"/>
</dbReference>
<dbReference type="PRINTS" id="PR00326">
    <property type="entry name" value="GTP1OBG"/>
</dbReference>
<dbReference type="SUPFAM" id="SSF52540">
    <property type="entry name" value="P-loop containing nucleoside triphosphate hydrolases"/>
    <property type="match status" value="1"/>
</dbReference>
<dbReference type="PROSITE" id="PS51711">
    <property type="entry name" value="G_FEOB"/>
    <property type="match status" value="1"/>
</dbReference>